<feature type="chain" id="PRO_0000275938" description="Photosystem I P700 chlorophyll a apoprotein A1">
    <location>
        <begin position="1"/>
        <end position="750"/>
    </location>
</feature>
<feature type="transmembrane region" description="Helical; Name=I" evidence="1">
    <location>
        <begin position="70"/>
        <end position="93"/>
    </location>
</feature>
<feature type="transmembrane region" description="Helical; Name=II" evidence="1">
    <location>
        <begin position="156"/>
        <end position="179"/>
    </location>
</feature>
<feature type="transmembrane region" description="Helical; Name=III" evidence="1">
    <location>
        <begin position="195"/>
        <end position="219"/>
    </location>
</feature>
<feature type="transmembrane region" description="Helical; Name=IV" evidence="1">
    <location>
        <begin position="291"/>
        <end position="309"/>
    </location>
</feature>
<feature type="transmembrane region" description="Helical; Name=V" evidence="1">
    <location>
        <begin position="346"/>
        <end position="369"/>
    </location>
</feature>
<feature type="transmembrane region" description="Helical; Name=VI" evidence="1">
    <location>
        <begin position="385"/>
        <end position="411"/>
    </location>
</feature>
<feature type="transmembrane region" description="Helical; Name=VII" evidence="1">
    <location>
        <begin position="433"/>
        <end position="455"/>
    </location>
</feature>
<feature type="transmembrane region" description="Helical; Name=VIII" evidence="1">
    <location>
        <begin position="531"/>
        <end position="549"/>
    </location>
</feature>
<feature type="transmembrane region" description="Helical; Name=IX" evidence="1">
    <location>
        <begin position="589"/>
        <end position="610"/>
    </location>
</feature>
<feature type="transmembrane region" description="Helical; Name=X" evidence="1">
    <location>
        <begin position="664"/>
        <end position="686"/>
    </location>
</feature>
<feature type="transmembrane region" description="Helical; Name=XI" evidence="1">
    <location>
        <begin position="724"/>
        <end position="744"/>
    </location>
</feature>
<feature type="binding site" evidence="1">
    <location>
        <position position="573"/>
    </location>
    <ligand>
        <name>[4Fe-4S] cluster</name>
        <dbReference type="ChEBI" id="CHEBI:49883"/>
        <note>ligand shared between dimeric partners</note>
    </ligand>
</feature>
<feature type="binding site" evidence="1">
    <location>
        <position position="582"/>
    </location>
    <ligand>
        <name>[4Fe-4S] cluster</name>
        <dbReference type="ChEBI" id="CHEBI:49883"/>
        <note>ligand shared between dimeric partners</note>
    </ligand>
</feature>
<feature type="binding site" description="axial binding residue" evidence="1">
    <location>
        <position position="675"/>
    </location>
    <ligand>
        <name>chlorophyll a'</name>
        <dbReference type="ChEBI" id="CHEBI:189419"/>
        <label>A1</label>
    </ligand>
    <ligandPart>
        <name>Mg</name>
        <dbReference type="ChEBI" id="CHEBI:25107"/>
    </ligandPart>
</feature>
<feature type="binding site" description="axial binding residue" evidence="1">
    <location>
        <position position="683"/>
    </location>
    <ligand>
        <name>chlorophyll a</name>
        <dbReference type="ChEBI" id="CHEBI:58416"/>
        <label>A3</label>
    </ligand>
    <ligandPart>
        <name>Mg</name>
        <dbReference type="ChEBI" id="CHEBI:25107"/>
    </ligandPart>
</feature>
<feature type="binding site" evidence="1">
    <location>
        <position position="691"/>
    </location>
    <ligand>
        <name>chlorophyll a</name>
        <dbReference type="ChEBI" id="CHEBI:58416"/>
        <label>A3</label>
    </ligand>
</feature>
<feature type="binding site" evidence="1">
    <location>
        <position position="692"/>
    </location>
    <ligand>
        <name>phylloquinone</name>
        <dbReference type="ChEBI" id="CHEBI:18067"/>
        <label>A</label>
    </ligand>
</feature>
<geneLocation type="chloroplast"/>
<accession>Q09MH8</accession>
<comment type="function">
    <text>PsaA and PsaB bind P700, the primary electron donor of photosystem I (PSI), as well as the electron acceptors A0, A1 and FX. PSI is a plastocyanin-ferredoxin oxidoreductase, converting photonic excitation into a charge separation, which transfers an electron from the donor P700 chlorophyll pair to the spectroscopically characterized acceptors A0, A1, FX, FA and FB in turn. Oxidized P700 is reduced on the lumenal side of the thylakoid membrane by plastocyanin.</text>
</comment>
<comment type="catalytic activity">
    <reaction evidence="1">
        <text>reduced [plastocyanin] + hnu + oxidized [2Fe-2S]-[ferredoxin] = oxidized [plastocyanin] + reduced [2Fe-2S]-[ferredoxin]</text>
        <dbReference type="Rhea" id="RHEA:30407"/>
        <dbReference type="Rhea" id="RHEA-COMP:10000"/>
        <dbReference type="Rhea" id="RHEA-COMP:10001"/>
        <dbReference type="Rhea" id="RHEA-COMP:10039"/>
        <dbReference type="Rhea" id="RHEA-COMP:10040"/>
        <dbReference type="ChEBI" id="CHEBI:29036"/>
        <dbReference type="ChEBI" id="CHEBI:30212"/>
        <dbReference type="ChEBI" id="CHEBI:33737"/>
        <dbReference type="ChEBI" id="CHEBI:33738"/>
        <dbReference type="ChEBI" id="CHEBI:49552"/>
        <dbReference type="EC" id="1.97.1.12"/>
    </reaction>
</comment>
<comment type="cofactor">
    <text evidence="1">P700 is a chlorophyll a/chlorophyll a' dimer, A0 is one or more chlorophyll a, A1 is one or both phylloquinones and FX is a shared 4Fe-4S iron-sulfur center.</text>
</comment>
<comment type="subunit">
    <text evidence="1">The PsaA/B heterodimer binds the P700 chlorophyll special pair and subsequent electron acceptors. PSI consists of a core antenna complex that captures photons, and an electron transfer chain that converts photonic excitation into a charge separation. The eukaryotic PSI reaction center is composed of at least 11 subunits.</text>
</comment>
<comment type="subcellular location">
    <subcellularLocation>
        <location evidence="1">Plastid</location>
        <location evidence="1">Chloroplast thylakoid membrane</location>
        <topology evidence="1">Multi-pass membrane protein</topology>
    </subcellularLocation>
</comment>
<comment type="similarity">
    <text evidence="1">Belongs to the PsaA/PsaB family.</text>
</comment>
<evidence type="ECO:0000255" key="1">
    <source>
        <dbReference type="HAMAP-Rule" id="MF_00458"/>
    </source>
</evidence>
<proteinExistence type="inferred from homology"/>
<reference key="1">
    <citation type="journal article" date="2006" name="BMC Plant Biol.">
        <title>The complete chloroplast genome sequence of Citrus sinensis (L.) Osbeck var 'Ridge Pineapple': organization and phylogenetic relationships to other angiosperms.</title>
        <authorList>
            <person name="Bausher M.G."/>
            <person name="Singh N.D."/>
            <person name="Lee S.-B."/>
            <person name="Jansen R.K."/>
            <person name="Daniell H."/>
        </authorList>
    </citation>
    <scope>NUCLEOTIDE SEQUENCE [LARGE SCALE GENOMIC DNA]</scope>
    <source>
        <strain>cv. Osbeck var. Ridge Pineapple</strain>
    </source>
</reference>
<protein>
    <recommendedName>
        <fullName evidence="1">Photosystem I P700 chlorophyll a apoprotein A1</fullName>
        <ecNumber evidence="1">1.97.1.12</ecNumber>
    </recommendedName>
    <alternativeName>
        <fullName evidence="1">PSI-A</fullName>
    </alternativeName>
    <alternativeName>
        <fullName evidence="1">PsaA</fullName>
    </alternativeName>
</protein>
<name>PSAA_CITSI</name>
<gene>
    <name evidence="1" type="primary">psaA</name>
</gene>
<keyword id="KW-0004">4Fe-4S</keyword>
<keyword id="KW-0148">Chlorophyll</keyword>
<keyword id="KW-0150">Chloroplast</keyword>
<keyword id="KW-0157">Chromophore</keyword>
<keyword id="KW-0249">Electron transport</keyword>
<keyword id="KW-0408">Iron</keyword>
<keyword id="KW-0411">Iron-sulfur</keyword>
<keyword id="KW-0460">Magnesium</keyword>
<keyword id="KW-0472">Membrane</keyword>
<keyword id="KW-0479">Metal-binding</keyword>
<keyword id="KW-0560">Oxidoreductase</keyword>
<keyword id="KW-0602">Photosynthesis</keyword>
<keyword id="KW-0603">Photosystem I</keyword>
<keyword id="KW-0934">Plastid</keyword>
<keyword id="KW-0793">Thylakoid</keyword>
<keyword id="KW-0812">Transmembrane</keyword>
<keyword id="KW-1133">Transmembrane helix</keyword>
<keyword id="KW-0813">Transport</keyword>
<dbReference type="EC" id="1.97.1.12" evidence="1"/>
<dbReference type="EMBL" id="DQ864733">
    <property type="protein sequence ID" value="ABI49020.1"/>
    <property type="molecule type" value="Genomic_DNA"/>
</dbReference>
<dbReference type="RefSeq" id="YP_740475.1">
    <property type="nucleotide sequence ID" value="NC_008334.1"/>
</dbReference>
<dbReference type="SMR" id="Q09MH8"/>
<dbReference type="GeneID" id="4271131"/>
<dbReference type="KEGG" id="cit:4271131"/>
<dbReference type="OrthoDB" id="927100at71240"/>
<dbReference type="GO" id="GO:0009535">
    <property type="term" value="C:chloroplast thylakoid membrane"/>
    <property type="evidence" value="ECO:0007669"/>
    <property type="project" value="UniProtKB-SubCell"/>
</dbReference>
<dbReference type="GO" id="GO:0009522">
    <property type="term" value="C:photosystem I"/>
    <property type="evidence" value="ECO:0007669"/>
    <property type="project" value="UniProtKB-KW"/>
</dbReference>
<dbReference type="GO" id="GO:0051539">
    <property type="term" value="F:4 iron, 4 sulfur cluster binding"/>
    <property type="evidence" value="ECO:0007669"/>
    <property type="project" value="UniProtKB-KW"/>
</dbReference>
<dbReference type="GO" id="GO:0016168">
    <property type="term" value="F:chlorophyll binding"/>
    <property type="evidence" value="ECO:0007669"/>
    <property type="project" value="UniProtKB-KW"/>
</dbReference>
<dbReference type="GO" id="GO:0009055">
    <property type="term" value="F:electron transfer activity"/>
    <property type="evidence" value="ECO:0007669"/>
    <property type="project" value="UniProtKB-UniRule"/>
</dbReference>
<dbReference type="GO" id="GO:0000287">
    <property type="term" value="F:magnesium ion binding"/>
    <property type="evidence" value="ECO:0007669"/>
    <property type="project" value="UniProtKB-UniRule"/>
</dbReference>
<dbReference type="GO" id="GO:0016491">
    <property type="term" value="F:oxidoreductase activity"/>
    <property type="evidence" value="ECO:0007669"/>
    <property type="project" value="UniProtKB-KW"/>
</dbReference>
<dbReference type="GO" id="GO:0015979">
    <property type="term" value="P:photosynthesis"/>
    <property type="evidence" value="ECO:0007669"/>
    <property type="project" value="UniProtKB-UniRule"/>
</dbReference>
<dbReference type="FunFam" id="1.20.1130.10:FF:000001">
    <property type="entry name" value="Photosystem I P700 chlorophyll a apoprotein A2"/>
    <property type="match status" value="1"/>
</dbReference>
<dbReference type="Gene3D" id="1.20.1130.10">
    <property type="entry name" value="Photosystem I PsaA/PsaB"/>
    <property type="match status" value="1"/>
</dbReference>
<dbReference type="HAMAP" id="MF_00458">
    <property type="entry name" value="PSI_PsaA"/>
    <property type="match status" value="1"/>
</dbReference>
<dbReference type="InterPro" id="IPR006243">
    <property type="entry name" value="PSI_PsaA"/>
</dbReference>
<dbReference type="InterPro" id="IPR001280">
    <property type="entry name" value="PSI_PsaA/B"/>
</dbReference>
<dbReference type="InterPro" id="IPR020586">
    <property type="entry name" value="PSI_PsaA/B_CS"/>
</dbReference>
<dbReference type="InterPro" id="IPR036408">
    <property type="entry name" value="PSI_PsaA/B_sf"/>
</dbReference>
<dbReference type="NCBIfam" id="TIGR01335">
    <property type="entry name" value="psaA"/>
    <property type="match status" value="1"/>
</dbReference>
<dbReference type="PANTHER" id="PTHR30128">
    <property type="entry name" value="OUTER MEMBRANE PROTEIN, OMPA-RELATED"/>
    <property type="match status" value="1"/>
</dbReference>
<dbReference type="PANTHER" id="PTHR30128:SF19">
    <property type="entry name" value="PHOTOSYSTEM I P700 CHLOROPHYLL A APOPROTEIN A1-RELATED"/>
    <property type="match status" value="1"/>
</dbReference>
<dbReference type="Pfam" id="PF00223">
    <property type="entry name" value="PsaA_PsaB"/>
    <property type="match status" value="1"/>
</dbReference>
<dbReference type="PIRSF" id="PIRSF002905">
    <property type="entry name" value="PSI_A"/>
    <property type="match status" value="1"/>
</dbReference>
<dbReference type="PRINTS" id="PR00257">
    <property type="entry name" value="PHOTSYSPSAAB"/>
</dbReference>
<dbReference type="SUPFAM" id="SSF81558">
    <property type="entry name" value="Photosystem I subunits PsaA/PsaB"/>
    <property type="match status" value="1"/>
</dbReference>
<dbReference type="PROSITE" id="PS00419">
    <property type="entry name" value="PHOTOSYSTEM_I_PSAAB"/>
    <property type="match status" value="1"/>
</dbReference>
<sequence length="750" mass="83132">MIIRSPEPEVKILVDRDPVKTSFEEWAKPGHFSRTIAKGPETTTWIWNLHADAHDFDSHTSDLEEISRKVFSAHFGQLSIIFLWLSGMYFHGARFSNYEAWLSDPTHIGPSAQVVWPIVGQEILNGDVGGGFRGIQITSGFFQLWRASGITSELQLYCTAIGALIFAALMLFAGWFHYHKAAPKLAWFQDVESMLNHHLAGLLGLGSLSWAGHQVHVSLPINQFLNAGVDPKEIPLPHEFILNRDLLAQLYPSFSEGATPFFTLNWSKYAEFLTFRGGLDPVTGGLWLTDIAHHHLAIAILFLIAGHMYRTNWGIGHGLKDILEAHKGPFTGQGHKGLYEILTTSWHAQLSLNLAMLGSLTIIVAHHMYSMPPYPYLATDYGTQLSLFTHHMWIGGFLIVGAAAHAAIFMVRDYDPTTRYNDLLDRVLRHRDAIISHLNWVCIFLGFHSFGLYIHNDTMSALGRPQDMFSDTAIQLQPVFAQWIQNTHALAPGGTAPGATASTSLTWGGVDLVAVGGKVALLPIPLGTADFLVHHIHAFTIHVTVLILLKGVLFARSSRLIPDKANLGFRFPCDGPGRGGTCQVSAWDHVFLGLFWMYNAISVVIFHFSWKMQSDVWGSISDQGVVTHITGGNFAQSSITINGWLRDFLWAQASQVIQSYGSSLSAYGLFFLGAHFVWAFSLMFLFSGRGYWQELIESIVWAHNKLKVAPATQPRALSIVQGRAVGVTHYLLGGIATTWAFFLARIIAVG</sequence>
<organism>
    <name type="scientific">Citrus sinensis</name>
    <name type="common">Sweet orange</name>
    <name type="synonym">Citrus aurantium var. sinensis</name>
    <dbReference type="NCBI Taxonomy" id="2711"/>
    <lineage>
        <taxon>Eukaryota</taxon>
        <taxon>Viridiplantae</taxon>
        <taxon>Streptophyta</taxon>
        <taxon>Embryophyta</taxon>
        <taxon>Tracheophyta</taxon>
        <taxon>Spermatophyta</taxon>
        <taxon>Magnoliopsida</taxon>
        <taxon>eudicotyledons</taxon>
        <taxon>Gunneridae</taxon>
        <taxon>Pentapetalae</taxon>
        <taxon>rosids</taxon>
        <taxon>malvids</taxon>
        <taxon>Sapindales</taxon>
        <taxon>Rutaceae</taxon>
        <taxon>Aurantioideae</taxon>
        <taxon>Citrus</taxon>
    </lineage>
</organism>